<sequence length="325" mass="34818">MSKRIYSRIAGTGSYLPEKVLTNDDMSKIVDTSDEWIFSRTGIRERHIVADDQTTSDLAYFASLRAMEAAGVTADEIDLIVIGTTTPDLIFPSTACLLQARLGNIGCGAMDVNAACSGFVYALSVADKFVRSGDAKTVLVVGAETLTRIVDWTDRTTCVLFGDGAGAVILKADEETGILSTHLHADGSKKELLWDPVGVSVGFGEGKNGGGALLMKGNDVFKYAVKALDSVVDETLAASGYDKHDLDWLIPHQANLRIIEATAKRMELPMEQVVVTVDRHGNTSSASVPLALDEAVRSGRVQRGQLLLLEAFGGGFTWGSALLRY</sequence>
<accession>Q8PNE8</accession>
<proteinExistence type="inferred from homology"/>
<gene>
    <name evidence="1" type="primary">fabH</name>
    <name type="ordered locus">XAC1123</name>
</gene>
<dbReference type="EC" id="2.3.1.180" evidence="1"/>
<dbReference type="EMBL" id="AE008923">
    <property type="protein sequence ID" value="AAM35996.1"/>
    <property type="molecule type" value="Genomic_DNA"/>
</dbReference>
<dbReference type="RefSeq" id="WP_011050716.1">
    <property type="nucleotide sequence ID" value="NC_003919.1"/>
</dbReference>
<dbReference type="SMR" id="Q8PNE8"/>
<dbReference type="KEGG" id="xac:XAC1123"/>
<dbReference type="eggNOG" id="COG0332">
    <property type="taxonomic scope" value="Bacteria"/>
</dbReference>
<dbReference type="HOGENOM" id="CLU_039592_3_1_6"/>
<dbReference type="UniPathway" id="UPA00094"/>
<dbReference type="Proteomes" id="UP000000576">
    <property type="component" value="Chromosome"/>
</dbReference>
<dbReference type="GO" id="GO:0005737">
    <property type="term" value="C:cytoplasm"/>
    <property type="evidence" value="ECO:0007669"/>
    <property type="project" value="UniProtKB-SubCell"/>
</dbReference>
<dbReference type="GO" id="GO:0004315">
    <property type="term" value="F:3-oxoacyl-[acyl-carrier-protein] synthase activity"/>
    <property type="evidence" value="ECO:0007669"/>
    <property type="project" value="InterPro"/>
</dbReference>
<dbReference type="GO" id="GO:0033818">
    <property type="term" value="F:beta-ketoacyl-acyl-carrier-protein synthase III activity"/>
    <property type="evidence" value="ECO:0007669"/>
    <property type="project" value="UniProtKB-UniRule"/>
</dbReference>
<dbReference type="GO" id="GO:0006633">
    <property type="term" value="P:fatty acid biosynthetic process"/>
    <property type="evidence" value="ECO:0007669"/>
    <property type="project" value="UniProtKB-UniRule"/>
</dbReference>
<dbReference type="CDD" id="cd00830">
    <property type="entry name" value="KAS_III"/>
    <property type="match status" value="1"/>
</dbReference>
<dbReference type="FunFam" id="3.40.47.10:FF:000004">
    <property type="entry name" value="3-oxoacyl-[acyl-carrier-protein] synthase 3"/>
    <property type="match status" value="1"/>
</dbReference>
<dbReference type="Gene3D" id="3.40.47.10">
    <property type="match status" value="1"/>
</dbReference>
<dbReference type="HAMAP" id="MF_01815">
    <property type="entry name" value="FabH"/>
    <property type="match status" value="1"/>
</dbReference>
<dbReference type="InterPro" id="IPR013747">
    <property type="entry name" value="ACP_syn_III_C"/>
</dbReference>
<dbReference type="InterPro" id="IPR013751">
    <property type="entry name" value="ACP_syn_III_N"/>
</dbReference>
<dbReference type="InterPro" id="IPR004655">
    <property type="entry name" value="FabH"/>
</dbReference>
<dbReference type="InterPro" id="IPR016039">
    <property type="entry name" value="Thiolase-like"/>
</dbReference>
<dbReference type="NCBIfam" id="TIGR00747">
    <property type="entry name" value="fabH"/>
    <property type="match status" value="1"/>
</dbReference>
<dbReference type="NCBIfam" id="NF006829">
    <property type="entry name" value="PRK09352.1"/>
    <property type="match status" value="1"/>
</dbReference>
<dbReference type="PANTHER" id="PTHR43091">
    <property type="entry name" value="3-OXOACYL-[ACYL-CARRIER-PROTEIN] SYNTHASE"/>
    <property type="match status" value="1"/>
</dbReference>
<dbReference type="PANTHER" id="PTHR43091:SF1">
    <property type="entry name" value="BETA-KETOACYL-[ACYL-CARRIER-PROTEIN] SYNTHASE III, CHLOROPLASTIC"/>
    <property type="match status" value="1"/>
</dbReference>
<dbReference type="Pfam" id="PF08545">
    <property type="entry name" value="ACP_syn_III"/>
    <property type="match status" value="1"/>
</dbReference>
<dbReference type="Pfam" id="PF08541">
    <property type="entry name" value="ACP_syn_III_C"/>
    <property type="match status" value="1"/>
</dbReference>
<dbReference type="SUPFAM" id="SSF53901">
    <property type="entry name" value="Thiolase-like"/>
    <property type="match status" value="1"/>
</dbReference>
<reference key="1">
    <citation type="journal article" date="2002" name="Nature">
        <title>Comparison of the genomes of two Xanthomonas pathogens with differing host specificities.</title>
        <authorList>
            <person name="da Silva A.C.R."/>
            <person name="Ferro J.A."/>
            <person name="Reinach F.C."/>
            <person name="Farah C.S."/>
            <person name="Furlan L.R."/>
            <person name="Quaggio R.B."/>
            <person name="Monteiro-Vitorello C.B."/>
            <person name="Van Sluys M.A."/>
            <person name="Almeida N.F. Jr."/>
            <person name="Alves L.M.C."/>
            <person name="do Amaral A.M."/>
            <person name="Bertolini M.C."/>
            <person name="Camargo L.E.A."/>
            <person name="Camarotte G."/>
            <person name="Cannavan F."/>
            <person name="Cardozo J."/>
            <person name="Chambergo F."/>
            <person name="Ciapina L.P."/>
            <person name="Cicarelli R.M.B."/>
            <person name="Coutinho L.L."/>
            <person name="Cursino-Santos J.R."/>
            <person name="El-Dorry H."/>
            <person name="Faria J.B."/>
            <person name="Ferreira A.J.S."/>
            <person name="Ferreira R.C.C."/>
            <person name="Ferro M.I.T."/>
            <person name="Formighieri E.F."/>
            <person name="Franco M.C."/>
            <person name="Greggio C.C."/>
            <person name="Gruber A."/>
            <person name="Katsuyama A.M."/>
            <person name="Kishi L.T."/>
            <person name="Leite R.P."/>
            <person name="Lemos E.G.M."/>
            <person name="Lemos M.V.F."/>
            <person name="Locali E.C."/>
            <person name="Machado M.A."/>
            <person name="Madeira A.M.B.N."/>
            <person name="Martinez-Rossi N.M."/>
            <person name="Martins E.C."/>
            <person name="Meidanis J."/>
            <person name="Menck C.F.M."/>
            <person name="Miyaki C.Y."/>
            <person name="Moon D.H."/>
            <person name="Moreira L.M."/>
            <person name="Novo M.T.M."/>
            <person name="Okura V.K."/>
            <person name="Oliveira M.C."/>
            <person name="Oliveira V.R."/>
            <person name="Pereira H.A."/>
            <person name="Rossi A."/>
            <person name="Sena J.A.D."/>
            <person name="Silva C."/>
            <person name="de Souza R.F."/>
            <person name="Spinola L.A.F."/>
            <person name="Takita M.A."/>
            <person name="Tamura R.E."/>
            <person name="Teixeira E.C."/>
            <person name="Tezza R.I.D."/>
            <person name="Trindade dos Santos M."/>
            <person name="Truffi D."/>
            <person name="Tsai S.M."/>
            <person name="White F.F."/>
            <person name="Setubal J.C."/>
            <person name="Kitajima J.P."/>
        </authorList>
    </citation>
    <scope>NUCLEOTIDE SEQUENCE [LARGE SCALE GENOMIC DNA]</scope>
    <source>
        <strain>306</strain>
    </source>
</reference>
<comment type="function">
    <text evidence="1">Catalyzes the condensation reaction of fatty acid synthesis by the addition to an acyl acceptor of two carbons from malonyl-ACP. Catalyzes the first condensation reaction which initiates fatty acid synthesis and may therefore play a role in governing the total rate of fatty acid production. Possesses both acetoacetyl-ACP synthase and acetyl transacylase activities. Its substrate specificity determines the biosynthesis of branched-chain and/or straight-chain of fatty acids.</text>
</comment>
<comment type="catalytic activity">
    <reaction evidence="1">
        <text>malonyl-[ACP] + acetyl-CoA + H(+) = 3-oxobutanoyl-[ACP] + CO2 + CoA</text>
        <dbReference type="Rhea" id="RHEA:12080"/>
        <dbReference type="Rhea" id="RHEA-COMP:9623"/>
        <dbReference type="Rhea" id="RHEA-COMP:9625"/>
        <dbReference type="ChEBI" id="CHEBI:15378"/>
        <dbReference type="ChEBI" id="CHEBI:16526"/>
        <dbReference type="ChEBI" id="CHEBI:57287"/>
        <dbReference type="ChEBI" id="CHEBI:57288"/>
        <dbReference type="ChEBI" id="CHEBI:78449"/>
        <dbReference type="ChEBI" id="CHEBI:78450"/>
        <dbReference type="EC" id="2.3.1.180"/>
    </reaction>
</comment>
<comment type="pathway">
    <text evidence="1">Lipid metabolism; fatty acid biosynthesis.</text>
</comment>
<comment type="subunit">
    <text evidence="1">Homodimer.</text>
</comment>
<comment type="subcellular location">
    <subcellularLocation>
        <location evidence="1">Cytoplasm</location>
    </subcellularLocation>
</comment>
<comment type="domain">
    <text evidence="1">The last Arg residue of the ACP-binding site is essential for the weak association between ACP/AcpP and FabH.</text>
</comment>
<comment type="similarity">
    <text evidence="1">Belongs to the thiolase-like superfamily. FabH family.</text>
</comment>
<keyword id="KW-0012">Acyltransferase</keyword>
<keyword id="KW-0963">Cytoplasm</keyword>
<keyword id="KW-0275">Fatty acid biosynthesis</keyword>
<keyword id="KW-0276">Fatty acid metabolism</keyword>
<keyword id="KW-0444">Lipid biosynthesis</keyword>
<keyword id="KW-0443">Lipid metabolism</keyword>
<keyword id="KW-0511">Multifunctional enzyme</keyword>
<keyword id="KW-0808">Transferase</keyword>
<protein>
    <recommendedName>
        <fullName evidence="1">Beta-ketoacyl-[acyl-carrier-protein] synthase III</fullName>
        <shortName evidence="1">Beta-ketoacyl-ACP synthase III</shortName>
        <shortName evidence="1">KAS III</shortName>
        <ecNumber evidence="1">2.3.1.180</ecNumber>
    </recommendedName>
    <alternativeName>
        <fullName evidence="1">3-oxoacyl-[acyl-carrier-protein] synthase 3</fullName>
    </alternativeName>
    <alternativeName>
        <fullName evidence="1">3-oxoacyl-[acyl-carrier-protein] synthase III</fullName>
    </alternativeName>
</protein>
<name>FABH_XANAC</name>
<evidence type="ECO:0000255" key="1">
    <source>
        <dbReference type="HAMAP-Rule" id="MF_01815"/>
    </source>
</evidence>
<organism>
    <name type="scientific">Xanthomonas axonopodis pv. citri (strain 306)</name>
    <dbReference type="NCBI Taxonomy" id="190486"/>
    <lineage>
        <taxon>Bacteria</taxon>
        <taxon>Pseudomonadati</taxon>
        <taxon>Pseudomonadota</taxon>
        <taxon>Gammaproteobacteria</taxon>
        <taxon>Lysobacterales</taxon>
        <taxon>Lysobacteraceae</taxon>
        <taxon>Xanthomonas</taxon>
    </lineage>
</organism>
<feature type="chain" id="PRO_0000110511" description="Beta-ketoacyl-[acyl-carrier-protein] synthase III">
    <location>
        <begin position="1"/>
        <end position="325"/>
    </location>
</feature>
<feature type="region of interest" description="ACP-binding" evidence="1">
    <location>
        <begin position="253"/>
        <end position="257"/>
    </location>
</feature>
<feature type="active site" evidence="1">
    <location>
        <position position="116"/>
    </location>
</feature>
<feature type="active site" evidence="1">
    <location>
        <position position="252"/>
    </location>
</feature>
<feature type="active site" evidence="1">
    <location>
        <position position="282"/>
    </location>
</feature>